<name>UXAC_ECOLI</name>
<keyword id="KW-0413">Isomerase</keyword>
<keyword id="KW-1185">Reference proteome</keyword>
<reference key="1">
    <citation type="submission" date="1992-09" db="EMBL/GenBank/DDBJ databases">
        <authorList>
            <person name="Mizobuchi K."/>
        </authorList>
    </citation>
    <scope>NUCLEOTIDE SEQUENCE [GENOMIC DNA]</scope>
    <source>
        <strain>K12 / W3110 / ATCC 27325 / DSM 5911</strain>
    </source>
</reference>
<reference key="2">
    <citation type="journal article" date="1997" name="Science">
        <title>The complete genome sequence of Escherichia coli K-12.</title>
        <authorList>
            <person name="Blattner F.R."/>
            <person name="Plunkett G. III"/>
            <person name="Bloch C.A."/>
            <person name="Perna N.T."/>
            <person name="Burland V."/>
            <person name="Riley M."/>
            <person name="Collado-Vides J."/>
            <person name="Glasner J.D."/>
            <person name="Rode C.K."/>
            <person name="Mayhew G.F."/>
            <person name="Gregor J."/>
            <person name="Davis N.W."/>
            <person name="Kirkpatrick H.A."/>
            <person name="Goeden M.A."/>
            <person name="Rose D.J."/>
            <person name="Mau B."/>
            <person name="Shao Y."/>
        </authorList>
    </citation>
    <scope>NUCLEOTIDE SEQUENCE [LARGE SCALE GENOMIC DNA]</scope>
    <source>
        <strain>K12 / MG1655 / ATCC 47076</strain>
    </source>
</reference>
<reference key="3">
    <citation type="journal article" date="2006" name="Mol. Syst. Biol.">
        <title>Highly accurate genome sequences of Escherichia coli K-12 strains MG1655 and W3110.</title>
        <authorList>
            <person name="Hayashi K."/>
            <person name="Morooka N."/>
            <person name="Yamamoto Y."/>
            <person name="Fujita K."/>
            <person name="Isono K."/>
            <person name="Choi S."/>
            <person name="Ohtsubo E."/>
            <person name="Baba T."/>
            <person name="Wanner B.L."/>
            <person name="Mori H."/>
            <person name="Horiuchi T."/>
        </authorList>
    </citation>
    <scope>NUCLEOTIDE SEQUENCE [LARGE SCALE GENOMIC DNA]</scope>
    <source>
        <strain>K12 / W3110 / ATCC 27325 / DSM 5911</strain>
    </source>
</reference>
<reference key="4">
    <citation type="journal article" date="2009" name="J. Bacteriol.">
        <title>Involvement of the leucine response transcription factor LeuO in regulation of the genes for sulfa drug efflux.</title>
        <authorList>
            <person name="Shimada T."/>
            <person name="Yamamoto K."/>
            <person name="Ishihama A."/>
        </authorList>
    </citation>
    <scope>OPERON STRUCTURE</scope>
    <scope>INDUCTION</scope>
    <source>
        <strain>K12 / BW25113</strain>
    </source>
</reference>
<comment type="catalytic activity">
    <reaction>
        <text>D-glucuronate = D-fructuronate</text>
        <dbReference type="Rhea" id="RHEA:13049"/>
        <dbReference type="ChEBI" id="CHEBI:58720"/>
        <dbReference type="ChEBI" id="CHEBI:59863"/>
        <dbReference type="EC" id="5.3.1.12"/>
    </reaction>
</comment>
<comment type="catalytic activity">
    <reaction>
        <text>aldehydo-D-galacturonate = keto-D-tagaturonate</text>
        <dbReference type="Rhea" id="RHEA:27702"/>
        <dbReference type="ChEBI" id="CHEBI:12952"/>
        <dbReference type="ChEBI" id="CHEBI:17886"/>
        <dbReference type="EC" id="5.3.1.12"/>
    </reaction>
</comment>
<comment type="pathway">
    <text>Carbohydrate metabolism; pentose and glucuronate interconversion.</text>
</comment>
<comment type="induction">
    <text evidence="1">Repressed by LeuO and H-NS. Part of the uxaCA operon.</text>
</comment>
<comment type="similarity">
    <text evidence="2">Belongs to the metallo-dependent hydrolases superfamily. Uronate isomerase family.</text>
</comment>
<organism>
    <name type="scientific">Escherichia coli (strain K12)</name>
    <dbReference type="NCBI Taxonomy" id="83333"/>
    <lineage>
        <taxon>Bacteria</taxon>
        <taxon>Pseudomonadati</taxon>
        <taxon>Pseudomonadota</taxon>
        <taxon>Gammaproteobacteria</taxon>
        <taxon>Enterobacterales</taxon>
        <taxon>Enterobacteriaceae</taxon>
        <taxon>Escherichia</taxon>
    </lineage>
</organism>
<sequence>MTPFMTEDFLLDTEFARRLYHDYAKDQPIFDYHCHLPPQQIAEDYRFKNLYDIWLKGDHYKWRAMRTNGVAERLCTGDASDREKFDAWAATVPHTIGNPLYHWTHLELRRPFGITGKLLSPSTADEIWNECNELLAQDNFSARGIMQQMNVKMVGTTDDPIDSLEHHAEIAKDGSFTIKVLPSWRPDKAFNIEQATFNDYMAKLGEVSDTDIRRFADLQTALTKRLDHFAAHGCKVSDHALDVVMFAEANEAELDSILARRLAGETLSEHEVAQFKTAVLVFLGAEYARRGWVQQYHIGALRNNNLRQFKLLGPDVGFDSINDRPMAEELSKLLSKQNEENLLPKTILYCLNPRDNEVLGTMIGNFQGEGMPGKMQFGSGWWFNDQKDGMERQMTQLAQLGLLSRFVGMLTDSRSFLSYTRHEYFRRILCQMIGRWVEAGEAPADINLLGEMVKNICFNNARDYFAIELN</sequence>
<protein>
    <recommendedName>
        <fullName>Uronate isomerase</fullName>
        <ecNumber>5.3.1.12</ecNumber>
    </recommendedName>
    <alternativeName>
        <fullName>Glucuronate isomerase</fullName>
    </alternativeName>
    <alternativeName>
        <fullName>Uronic isomerase</fullName>
    </alternativeName>
</protein>
<proteinExistence type="evidence at transcript level"/>
<feature type="chain" id="PRO_0000172771" description="Uronate isomerase">
    <location>
        <begin position="1"/>
        <end position="470"/>
    </location>
</feature>
<dbReference type="EC" id="5.3.1.12"/>
<dbReference type="EMBL" id="D13328">
    <property type="protein sequence ID" value="BAA02587.1"/>
    <property type="molecule type" value="Genomic_DNA"/>
</dbReference>
<dbReference type="EMBL" id="U18997">
    <property type="protein sequence ID" value="AAA57896.1"/>
    <property type="status" value="ALT_FRAME"/>
    <property type="molecule type" value="Genomic_DNA"/>
</dbReference>
<dbReference type="EMBL" id="U18997">
    <property type="protein sequence ID" value="AAA57895.1"/>
    <property type="status" value="ALT_FRAME"/>
    <property type="molecule type" value="Genomic_DNA"/>
</dbReference>
<dbReference type="EMBL" id="U18997">
    <property type="protein sequence ID" value="AAA57894.1"/>
    <property type="status" value="ALT_FRAME"/>
    <property type="molecule type" value="Genomic_DNA"/>
</dbReference>
<dbReference type="EMBL" id="U00096">
    <property type="protein sequence ID" value="AAC76127.1"/>
    <property type="molecule type" value="Genomic_DNA"/>
</dbReference>
<dbReference type="EMBL" id="AP009048">
    <property type="protein sequence ID" value="BAE77142.1"/>
    <property type="molecule type" value="Genomic_DNA"/>
</dbReference>
<dbReference type="PIR" id="A65098">
    <property type="entry name" value="A65098"/>
</dbReference>
<dbReference type="RefSeq" id="NP_417563.1">
    <property type="nucleotide sequence ID" value="NC_000913.3"/>
</dbReference>
<dbReference type="RefSeq" id="WP_000187442.1">
    <property type="nucleotide sequence ID" value="NZ_SSZK01000007.1"/>
</dbReference>
<dbReference type="SMR" id="P0A8G3"/>
<dbReference type="BioGRID" id="4262408">
    <property type="interactions" value="37"/>
</dbReference>
<dbReference type="FunCoup" id="P0A8G3">
    <property type="interactions" value="209"/>
</dbReference>
<dbReference type="IntAct" id="P0A8G3">
    <property type="interactions" value="9"/>
</dbReference>
<dbReference type="STRING" id="511145.b3092"/>
<dbReference type="jPOST" id="P0A8G3"/>
<dbReference type="PaxDb" id="511145-b3092"/>
<dbReference type="EnsemblBacteria" id="AAC76127">
    <property type="protein sequence ID" value="AAC76127"/>
    <property type="gene ID" value="b3092"/>
</dbReference>
<dbReference type="GeneID" id="93778895"/>
<dbReference type="GeneID" id="947599"/>
<dbReference type="KEGG" id="ecj:JW3063"/>
<dbReference type="KEGG" id="eco:b3092"/>
<dbReference type="KEGG" id="ecoc:C3026_16885"/>
<dbReference type="PATRIC" id="fig|511145.12.peg.3187"/>
<dbReference type="EchoBASE" id="EB2593"/>
<dbReference type="eggNOG" id="COG1904">
    <property type="taxonomic scope" value="Bacteria"/>
</dbReference>
<dbReference type="HOGENOM" id="CLU_044465_1_0_6"/>
<dbReference type="InParanoid" id="P0A8G3"/>
<dbReference type="OMA" id="WRPDKAM"/>
<dbReference type="OrthoDB" id="9766564at2"/>
<dbReference type="PhylomeDB" id="P0A8G3"/>
<dbReference type="BioCyc" id="EcoCyc:UXAC-MONOMER"/>
<dbReference type="BioCyc" id="MetaCyc:UXAC-MONOMER"/>
<dbReference type="BRENDA" id="5.3.1.12">
    <property type="organism ID" value="2026"/>
</dbReference>
<dbReference type="UniPathway" id="UPA00246"/>
<dbReference type="PRO" id="PR:P0A8G3"/>
<dbReference type="Proteomes" id="UP000000625">
    <property type="component" value="Chromosome"/>
</dbReference>
<dbReference type="GO" id="GO:0008880">
    <property type="term" value="F:glucuronate isomerase activity"/>
    <property type="evidence" value="ECO:0007669"/>
    <property type="project" value="UniProtKB-UniRule"/>
</dbReference>
<dbReference type="GO" id="GO:0019698">
    <property type="term" value="P:D-galacturonate catabolic process"/>
    <property type="evidence" value="ECO:0000315"/>
    <property type="project" value="EcoCyc"/>
</dbReference>
<dbReference type="GO" id="GO:0042840">
    <property type="term" value="P:D-glucuronate catabolic process"/>
    <property type="evidence" value="ECO:0000314"/>
    <property type="project" value="EcoCyc"/>
</dbReference>
<dbReference type="FunFam" id="1.10.2020.10:FF:000001">
    <property type="entry name" value="Uronate isomerase"/>
    <property type="match status" value="1"/>
</dbReference>
<dbReference type="Gene3D" id="3.20.20.140">
    <property type="entry name" value="Metal-dependent hydrolases"/>
    <property type="match status" value="1"/>
</dbReference>
<dbReference type="Gene3D" id="1.10.2020.10">
    <property type="entry name" value="uronate isomerase, domain 2, chain A"/>
    <property type="match status" value="1"/>
</dbReference>
<dbReference type="HAMAP" id="MF_00675">
    <property type="entry name" value="UxaC"/>
    <property type="match status" value="1"/>
</dbReference>
<dbReference type="InterPro" id="IPR032466">
    <property type="entry name" value="Metal_Hydrolase"/>
</dbReference>
<dbReference type="InterPro" id="IPR003766">
    <property type="entry name" value="Uronate_isomerase"/>
</dbReference>
<dbReference type="NCBIfam" id="NF002794">
    <property type="entry name" value="PRK02925.1"/>
    <property type="match status" value="1"/>
</dbReference>
<dbReference type="PANTHER" id="PTHR30068">
    <property type="entry name" value="URONATE ISOMERASE"/>
    <property type="match status" value="1"/>
</dbReference>
<dbReference type="PANTHER" id="PTHR30068:SF4">
    <property type="entry name" value="URONATE ISOMERASE"/>
    <property type="match status" value="1"/>
</dbReference>
<dbReference type="Pfam" id="PF02614">
    <property type="entry name" value="UxaC"/>
    <property type="match status" value="1"/>
</dbReference>
<dbReference type="SUPFAM" id="SSF51556">
    <property type="entry name" value="Metallo-dependent hydrolases"/>
    <property type="match status" value="1"/>
</dbReference>
<gene>
    <name type="primary">uxaC</name>
    <name type="synonym">ygjX</name>
    <name type="synonym">ygjY</name>
    <name type="synonym">ygjZ</name>
    <name type="ordered locus">b3092</name>
    <name type="ordered locus">JW3063</name>
</gene>
<evidence type="ECO:0000269" key="1">
    <source>
    </source>
</evidence>
<evidence type="ECO:0000305" key="2"/>
<accession>P0A8G3</accession>
<accession>P42605</accession>
<accession>P42606</accession>
<accession>P42607</accession>
<accession>P76662</accession>
<accession>P76663</accession>
<accession>P76664</accession>
<accession>Q2M9B4</accession>